<gene>
    <name type="primary">eltB</name>
    <name type="synonym">ltpB</name>
</gene>
<accession>P32890</accession>
<accession>P01557</accession>
<accession>P13768</accession>
<feature type="signal peptide" evidence="1">
    <location>
        <begin position="1"/>
        <end position="21"/>
    </location>
</feature>
<feature type="chain" id="PRO_0000019355" description="Heat-labile enterotoxin B chain">
    <location>
        <begin position="22"/>
        <end position="124"/>
    </location>
</feature>
<feature type="disulfide bond">
    <location>
        <begin position="30"/>
        <end position="107"/>
    </location>
</feature>
<feature type="sequence variant" description="In strain: 240-3 / ETEC.">
    <original>T</original>
    <variation>A</variation>
    <location>
        <position position="96"/>
    </location>
</feature>
<feature type="helix" evidence="2">
    <location>
        <begin position="26"/>
        <end position="30"/>
    </location>
</feature>
<feature type="strand" evidence="2">
    <location>
        <begin position="36"/>
        <end position="43"/>
    </location>
</feature>
<feature type="strand" evidence="2">
    <location>
        <begin position="46"/>
        <end position="51"/>
    </location>
</feature>
<feature type="strand" evidence="2">
    <location>
        <begin position="58"/>
        <end position="62"/>
    </location>
</feature>
<feature type="strand" evidence="2">
    <location>
        <begin position="68"/>
        <end position="71"/>
    </location>
</feature>
<feature type="strand" evidence="3">
    <location>
        <begin position="76"/>
        <end position="78"/>
    </location>
</feature>
<feature type="helix" evidence="2">
    <location>
        <begin position="82"/>
        <end position="98"/>
    </location>
</feature>
<feature type="strand" evidence="2">
    <location>
        <begin position="103"/>
        <end position="123"/>
    </location>
</feature>
<evidence type="ECO:0000269" key="1">
    <source>
    </source>
</evidence>
<evidence type="ECO:0007829" key="2">
    <source>
        <dbReference type="PDB" id="1DJR"/>
    </source>
</evidence>
<evidence type="ECO:0007829" key="3">
    <source>
        <dbReference type="PDB" id="1HTL"/>
    </source>
</evidence>
<keyword id="KW-0002">3D-structure</keyword>
<keyword id="KW-0903">Direct protein sequencing</keyword>
<keyword id="KW-1015">Disulfide bond</keyword>
<keyword id="KW-0260">Enterotoxin</keyword>
<keyword id="KW-0732">Signal</keyword>
<keyword id="KW-0800">Toxin</keyword>
<keyword id="KW-0843">Virulence</keyword>
<name>ELBP_ECOLX</name>
<dbReference type="EMBL" id="M17873">
    <property type="protein sequence ID" value="AAA98065.1"/>
    <property type="molecule type" value="Genomic_DNA"/>
</dbReference>
<dbReference type="EMBL" id="M15363">
    <property type="protein sequence ID" value="AAA24792.1"/>
    <property type="molecule type" value="Genomic_DNA"/>
</dbReference>
<dbReference type="EMBL" id="M17101">
    <property type="protein sequence ID" value="AAA23973.1"/>
    <property type="molecule type" value="Genomic_DNA"/>
</dbReference>
<dbReference type="PIR" id="A01820">
    <property type="entry name" value="QLECB"/>
</dbReference>
<dbReference type="RefSeq" id="WP_015675362.1">
    <property type="nucleotide sequence ID" value="NZ_WVUR01000120.1"/>
</dbReference>
<dbReference type="PDB" id="1DJR">
    <property type="method" value="X-ray"/>
    <property type="resolution" value="1.30 A"/>
    <property type="chains" value="D/E/F/G/H=22-124"/>
</dbReference>
<dbReference type="PDB" id="1EEF">
    <property type="method" value="X-ray"/>
    <property type="resolution" value="1.80 A"/>
    <property type="chains" value="D/E/F/G/H/L/M/N/O/P=22-124"/>
</dbReference>
<dbReference type="PDB" id="1EFI">
    <property type="method" value="X-ray"/>
    <property type="resolution" value="1.60 A"/>
    <property type="chains" value="D/E/F/G/H=22-124"/>
</dbReference>
<dbReference type="PDB" id="1FD7">
    <property type="method" value="X-ray"/>
    <property type="resolution" value="1.80 A"/>
    <property type="chains" value="D/E/F/G/H/L/M/N/O/P=22-124"/>
</dbReference>
<dbReference type="PDB" id="1HTL">
    <property type="method" value="X-ray"/>
    <property type="resolution" value="2.50 A"/>
    <property type="chains" value="D/E/F/G/H=22-124"/>
</dbReference>
<dbReference type="PDB" id="1JQY">
    <property type="method" value="X-ray"/>
    <property type="resolution" value="2.14 A"/>
    <property type="chains" value="D/E/F/G/H/L/M/N/O/P/V/W/X/Y/Z=22-124"/>
</dbReference>
<dbReference type="PDB" id="1LT3">
    <property type="method" value="X-ray"/>
    <property type="resolution" value="2.00 A"/>
    <property type="chains" value="D/E/F/G/H=22-124"/>
</dbReference>
<dbReference type="PDB" id="1LT4">
    <property type="method" value="X-ray"/>
    <property type="resolution" value="2.00 A"/>
    <property type="chains" value="D/E/F/G/H=22-124"/>
</dbReference>
<dbReference type="PDB" id="1LT5">
    <property type="method" value="X-ray"/>
    <property type="resolution" value="1.70 A"/>
    <property type="chains" value="D/E/F/G/H=22-124"/>
</dbReference>
<dbReference type="PDB" id="1LT6">
    <property type="method" value="X-ray"/>
    <property type="resolution" value="2.20 A"/>
    <property type="chains" value="D/E/F/G/H/L/M/N/O/P=22-124"/>
</dbReference>
<dbReference type="PDB" id="1LTA">
    <property type="method" value="X-ray"/>
    <property type="resolution" value="2.20 A"/>
    <property type="chains" value="D/E/F/G/H=22-124"/>
</dbReference>
<dbReference type="PDB" id="1LTB">
    <property type="method" value="X-ray"/>
    <property type="resolution" value="2.60 A"/>
    <property type="chains" value="D/E/F/G/H=22-124"/>
</dbReference>
<dbReference type="PDB" id="1LTG">
    <property type="method" value="X-ray"/>
    <property type="resolution" value="2.40 A"/>
    <property type="chains" value="D/E/F/G/H=22-124"/>
</dbReference>
<dbReference type="PDB" id="1LTI">
    <property type="method" value="X-ray"/>
    <property type="resolution" value="2.13 A"/>
    <property type="chains" value="D/E/F/G/H=22-124"/>
</dbReference>
<dbReference type="PDB" id="1LTS">
    <property type="method" value="X-ray"/>
    <property type="resolution" value="1.95 A"/>
    <property type="chains" value="D/E/F/G/H=22-124"/>
</dbReference>
<dbReference type="PDB" id="1LTT">
    <property type="method" value="X-ray"/>
    <property type="resolution" value="2.30 A"/>
    <property type="chains" value="D/E/F/G/H=22-124"/>
</dbReference>
<dbReference type="PDB" id="1PZI">
    <property type="method" value="X-ray"/>
    <property type="resolution" value="1.99 A"/>
    <property type="chains" value="D/E/F/G/H=22-124"/>
</dbReference>
<dbReference type="PDB" id="1TET">
    <property type="method" value="X-ray"/>
    <property type="resolution" value="2.30 A"/>
    <property type="chains" value="P=71-85"/>
</dbReference>
<dbReference type="PDB" id="2XRQ">
    <property type="method" value="X-ray"/>
    <property type="resolution" value="2.40 A"/>
    <property type="chains" value="D/E/F/G/H=22-124"/>
</dbReference>
<dbReference type="PDB" id="2XRS">
    <property type="method" value="X-ray"/>
    <property type="resolution" value="1.81 A"/>
    <property type="chains" value="D/E/F/G/H/L/M/N/O/P=22-124"/>
</dbReference>
<dbReference type="PDB" id="5LZI">
    <property type="method" value="X-ray"/>
    <property type="resolution" value="1.60 A"/>
    <property type="chains" value="A/B/C/D/E=22-124"/>
</dbReference>
<dbReference type="PDB" id="6IAL">
    <property type="method" value="X-ray"/>
    <property type="resolution" value="1.45 A"/>
    <property type="chains" value="A/B/C/D/E/F/G/H/I/J=22-124"/>
</dbReference>
<dbReference type="PDBsum" id="1DJR"/>
<dbReference type="PDBsum" id="1EEF"/>
<dbReference type="PDBsum" id="1EFI"/>
<dbReference type="PDBsum" id="1FD7"/>
<dbReference type="PDBsum" id="1HTL"/>
<dbReference type="PDBsum" id="1JQY"/>
<dbReference type="PDBsum" id="1LT3"/>
<dbReference type="PDBsum" id="1LT4"/>
<dbReference type="PDBsum" id="1LT5"/>
<dbReference type="PDBsum" id="1LT6"/>
<dbReference type="PDBsum" id="1LTA"/>
<dbReference type="PDBsum" id="1LTB"/>
<dbReference type="PDBsum" id="1LTG"/>
<dbReference type="PDBsum" id="1LTI"/>
<dbReference type="PDBsum" id="1LTS"/>
<dbReference type="PDBsum" id="1LTT"/>
<dbReference type="PDBsum" id="1PZI"/>
<dbReference type="PDBsum" id="1TET"/>
<dbReference type="PDBsum" id="2XRQ"/>
<dbReference type="PDBsum" id="2XRS"/>
<dbReference type="PDBsum" id="5LZI"/>
<dbReference type="PDBsum" id="6IAL"/>
<dbReference type="SMR" id="P32890"/>
<dbReference type="DIP" id="DIP-36815N"/>
<dbReference type="IntAct" id="P32890">
    <property type="interactions" value="2"/>
</dbReference>
<dbReference type="DrugBank" id="DB03421">
    <property type="generic name" value="2-Phenethyl-2,3-Dihydro-Phthalazine-1,4-Dione"/>
</dbReference>
<dbReference type="DrugBank" id="DB02213">
    <property type="generic name" value="Metanitrophenyl-Alpha-D-Galactoside"/>
</dbReference>
<dbReference type="DrugBank" id="DB04040">
    <property type="generic name" value="N-[1,3-Di(4-morpholinyl)-2-propanyl]-3-(Alpha-D-galactopyranosyloxy)-5-nitrobenzamide"/>
</dbReference>
<dbReference type="DrugBank" id="DB03446">
    <property type="generic name" value="N-Benzyl-3-(alpha-D-galactopyranosyloxy)benzamide"/>
</dbReference>
<dbReference type="DrugBank" id="DB03242">
    <property type="generic name" value="P-Aminophenyl-Alpha-D-Galactopyranoside"/>
</dbReference>
<dbReference type="DrugBank" id="DB04396">
    <property type="generic name" value="Thiodigalactoside"/>
</dbReference>
<dbReference type="UniLectin" id="P32890"/>
<dbReference type="ABCD" id="P32890">
    <property type="antibodies" value="1 sequenced antibody"/>
</dbReference>
<dbReference type="EvolutionaryTrace" id="P32890"/>
<dbReference type="GO" id="GO:0005576">
    <property type="term" value="C:extracellular region"/>
    <property type="evidence" value="ECO:0007669"/>
    <property type="project" value="InterPro"/>
</dbReference>
<dbReference type="GO" id="GO:0090729">
    <property type="term" value="F:toxin activity"/>
    <property type="evidence" value="ECO:0007669"/>
    <property type="project" value="UniProtKB-KW"/>
</dbReference>
<dbReference type="GO" id="GO:0031640">
    <property type="term" value="P:killing of cells of another organism"/>
    <property type="evidence" value="ECO:0000314"/>
    <property type="project" value="CACAO"/>
</dbReference>
<dbReference type="Gene3D" id="2.40.50.110">
    <property type="match status" value="1"/>
</dbReference>
<dbReference type="InterPro" id="IPR008992">
    <property type="entry name" value="Enterotoxin"/>
</dbReference>
<dbReference type="InterPro" id="IPR001835">
    <property type="entry name" value="Enterotoxin_B"/>
</dbReference>
<dbReference type="Pfam" id="PF01376">
    <property type="entry name" value="Enterotoxin_b"/>
    <property type="match status" value="1"/>
</dbReference>
<dbReference type="PRINTS" id="PR00772">
    <property type="entry name" value="ENTEROTOXINB"/>
</dbReference>
<dbReference type="SUPFAM" id="SSF50203">
    <property type="entry name" value="Bacterial enterotoxins"/>
    <property type="match status" value="1"/>
</dbReference>
<sequence>MNKVKCYVLFTALLSSLYAHGAPQTITELCSEYRNTQIYTINDKILSYTESMAGKREMVIITFKSGETFQVEVPGSQHIDSQKKAIERMKDTLRITYLTETKIDKLCVWNNKTPNSIAAISMKN</sequence>
<proteinExistence type="evidence at protein level"/>
<protein>
    <recommendedName>
        <fullName>Heat-labile enterotoxin B chain</fullName>
    </recommendedName>
    <alternativeName>
        <fullName>LT-B, porcine</fullName>
    </alternativeName>
    <alternativeName>
        <fullName>LTP-B</fullName>
    </alternativeName>
</protein>
<organism>
    <name type="scientific">Escherichia coli</name>
    <dbReference type="NCBI Taxonomy" id="562"/>
    <lineage>
        <taxon>Bacteria</taxon>
        <taxon>Pseudomonadati</taxon>
        <taxon>Pseudomonadota</taxon>
        <taxon>Gammaproteobacteria</taxon>
        <taxon>Enterobacterales</taxon>
        <taxon>Enterobacteriaceae</taxon>
        <taxon>Escherichia</taxon>
    </lineage>
</organism>
<reference key="1">
    <citation type="journal article" date="1980" name="Nature">
        <title>Amino acid sequence homology between cholera toxin and Escherichia coli heat-labile toxin.</title>
        <authorList>
            <person name="Dallas W.S."/>
            <person name="Falkow S."/>
        </authorList>
    </citation>
    <scope>NUCLEOTIDE SEQUENCE [GENOMIC DNA]</scope>
    <source>
        <strain>Isolate P307 / ETEC</strain>
    </source>
</reference>
<reference key="2">
    <citation type="journal article" date="1985" name="Infect. Immun.">
        <title>Nucleotide sequence comparison between heat-labile toxin B-subunit cistrons from Escherichia coli of human and porcine origin.</title>
        <authorList>
            <person name="Leong J."/>
            <person name="Vinal A.C."/>
            <person name="Dallas W.S."/>
        </authorList>
    </citation>
    <scope>SEQUENCE REVISION TO 28 AND 64</scope>
    <source>
        <strain>Isolate P307 / ETEC</strain>
    </source>
</reference>
<reference key="3">
    <citation type="journal article" date="1987" name="J. Bacteriol.">
        <title>Evolutionary origin of pathogenic determinants in enterotoxigenic Escherichia coli and Vibrio cholerae O1.</title>
        <authorList>
            <person name="Yamamoto T."/>
            <person name="Gojobori T."/>
            <person name="Yokota T."/>
        </authorList>
    </citation>
    <scope>NUCLEOTIDE SEQUENCE [GENOMIC DNA]</scope>
    <source>
        <strain>Isolate PCG86 / ETEC</strain>
    </source>
</reference>
<reference key="4">
    <citation type="journal article" date="1987" name="J. Biol. Chem.">
        <title>A functional interaction between the signal peptide and the translation apparatus is detected by the use of a single point mutation which blocks translocation across mammalian endoplasmic reticulum.</title>
        <authorList>
            <person name="Ibrahimi I."/>
            <person name="Gentz R."/>
        </authorList>
    </citation>
    <scope>NUCLEOTIDE SEQUENCE [GENOMIC DNA] OF 1-22</scope>
</reference>
<reference key="5">
    <citation type="journal article" date="1987" name="Microb. Pathog.">
        <title>A unique amino acid sequence of the B subunit of a heat-labile enterotoxin isolated from a human enterotoxigenic Escherichia coli.</title>
        <authorList>
            <person name="Tsuji T."/>
            <person name="Iida T."/>
            <person name="Honda T."/>
            <person name="Miwatani T."/>
            <person name="Nagahama M."/>
            <person name="Sakurai J."/>
            <person name="Wada K."/>
            <person name="Matsubara H."/>
        </authorList>
    </citation>
    <scope>PROTEIN SEQUENCE OF 22-124</scope>
    <source>
        <strain>240-3 / ETEC</strain>
    </source>
</reference>
<reference key="6">
    <citation type="journal article" date="1993" name="J. Mol. Biol.">
        <title>Refined structure of Escherichia coli heat-labile enterotoxin, a close relative of cholera toxin.</title>
        <authorList>
            <person name="Sixma T.K."/>
            <person name="van Zanten B.A.M."/>
            <person name="Dauter Z."/>
            <person name="Hol W.G.J."/>
        </authorList>
    </citation>
    <scope>X-RAY CRYSTALLOGRAPHY (1.95 ANGSTROMS)</scope>
</reference>
<reference key="7">
    <citation type="journal article" date="1991" name="Nature">
        <title>Crystal structure of a cholera toxin-related heat-labile enterotoxin from E. coli.</title>
        <authorList>
            <person name="Sixma T.K."/>
            <person name="Pronk S.E."/>
            <person name="Kalk K.H."/>
            <person name="Wartna E.S."/>
            <person name="van Zanten B.A.M."/>
            <person name="Witholt B."/>
            <person name="Hol W.G.J."/>
        </authorList>
    </citation>
    <scope>X-RAY CRYSTALLOGRAPHY (2.3 ANGSTROMS)</scope>
</reference>
<reference key="8">
    <citation type="journal article" date="2002" name="Chem. Biol.">
        <title>Anchor-based design of improved cholera toxin and E. coli heat-labile enterotoxin receptor binding antagonists that display multiple binding modes.</title>
        <authorList>
            <person name="Pickens J.C."/>
            <person name="Merritt E.A."/>
            <person name="Ahn M."/>
            <person name="Verlinde C.L.M.J."/>
            <person name="Hol W.G.J."/>
            <person name="Fan E."/>
        </authorList>
    </citation>
    <scope>X-RAY CRYSTALLOGRAPHY (2.14 ANGSTROMS)</scope>
</reference>
<reference key="9">
    <citation type="journal article" date="1995" name="Mol. Microbiol.">
        <title>Identification of errors among database sequence entries and comparison of correct amino acid sequences for the heat-labile enterotoxins of Escherichia coli and Vibrio cholerae.</title>
        <authorList>
            <person name="Domenighini M."/>
            <person name="Pizza M."/>
            <person name="Jobling M.G."/>
            <person name="Holmes R.K."/>
            <person name="Rappuoli R."/>
        </authorList>
    </citation>
    <scope>DISCUSSION OF SEQUENCE</scope>
</reference>
<comment type="function">
    <text>The biological activity of the toxin is produced by the A chain, which activates intracellular adenyl cyclase.</text>
</comment>
<comment type="subunit">
    <text>Heterohexamer of one A chain and of five B chains.</text>
</comment>